<comment type="function">
    <text evidence="2 3">Required, together with the TRAPP II subunit TRS33, for TRAPP II complex assembly or stability, and for proper Golgi localization of TRAPP and the Rab GTPase YPT31.</text>
</comment>
<comment type="subunit">
    <text evidence="2 3">Interacts with the TRAPP II complex; TRAPP II subunits TRS33 and TRS65 are required for this interaction.</text>
</comment>
<comment type="interaction">
    <interactant intactId="EBI-22370">
        <id>P32613</id>
    </interactant>
    <interactant intactId="EBI-19461">
        <id>Q03660</id>
        <label>TRS130</label>
    </interactant>
    <organismsDiffer>false</organismsDiffer>
    <experiments>8</experiments>
</comment>
<comment type="subcellular location">
    <subcellularLocation>
        <location evidence="2">Golgi apparatus</location>
        <location evidence="2">trans-Golgi network</location>
    </subcellularLocation>
</comment>
<comment type="miscellaneous">
    <text evidence="1">Present with 8660 molecules/cell in log phase SD medium.</text>
</comment>
<comment type="similarity">
    <text evidence="4">Belongs to the TRAPP small subunits family. Sedlin subfamily.</text>
</comment>
<dbReference type="EMBL" id="U18779">
    <property type="protein sequence ID" value="AAB64994.1"/>
    <property type="molecule type" value="Genomic_DNA"/>
</dbReference>
<dbReference type="EMBL" id="AY558442">
    <property type="protein sequence ID" value="AAS56768.1"/>
    <property type="molecule type" value="Genomic_DNA"/>
</dbReference>
<dbReference type="EMBL" id="BK006939">
    <property type="protein sequence ID" value="DAA07606.1"/>
    <property type="molecule type" value="Genomic_DNA"/>
</dbReference>
<dbReference type="PIR" id="S30829">
    <property type="entry name" value="S30829"/>
</dbReference>
<dbReference type="RefSeq" id="NP_010866.1">
    <property type="nucleotide sequence ID" value="NM_001178863.1"/>
</dbReference>
<dbReference type="PDB" id="3PR6">
    <property type="method" value="X-ray"/>
    <property type="resolution" value="1.80 A"/>
    <property type="chains" value="A=1-152"/>
</dbReference>
<dbReference type="PDB" id="7E2C">
    <property type="method" value="EM"/>
    <property type="resolution" value="4.18 A"/>
    <property type="chains" value="A=1-152"/>
</dbReference>
<dbReference type="PDB" id="7E2D">
    <property type="method" value="EM"/>
    <property type="resolution" value="3.71 A"/>
    <property type="chains" value="A=1-152"/>
</dbReference>
<dbReference type="PDB" id="7E8S">
    <property type="method" value="EM"/>
    <property type="resolution" value="4.36 A"/>
    <property type="chains" value="A/L=1-152"/>
</dbReference>
<dbReference type="PDB" id="7E8T">
    <property type="method" value="EM"/>
    <property type="resolution" value="3.80 A"/>
    <property type="chains" value="A=1-152"/>
</dbReference>
<dbReference type="PDB" id="7E93">
    <property type="method" value="EM"/>
    <property type="resolution" value="6.54 A"/>
    <property type="chains" value="A/L=1-152"/>
</dbReference>
<dbReference type="PDB" id="7E94">
    <property type="method" value="EM"/>
    <property type="resolution" value="4.67 A"/>
    <property type="chains" value="A/L=1-152"/>
</dbReference>
<dbReference type="PDB" id="7EA3">
    <property type="method" value="EM"/>
    <property type="resolution" value="4.31 A"/>
    <property type="chains" value="A/N=1-152"/>
</dbReference>
<dbReference type="PDB" id="7U05">
    <property type="method" value="EM"/>
    <property type="resolution" value="3.70 A"/>
    <property type="chains" value="D/d=1-152"/>
</dbReference>
<dbReference type="PDB" id="7U06">
    <property type="method" value="EM"/>
    <property type="resolution" value="4.20 A"/>
    <property type="chains" value="D/d=1-152"/>
</dbReference>
<dbReference type="PDBsum" id="3PR6"/>
<dbReference type="PDBsum" id="7E2C"/>
<dbReference type="PDBsum" id="7E2D"/>
<dbReference type="PDBsum" id="7E8S"/>
<dbReference type="PDBsum" id="7E8T"/>
<dbReference type="PDBsum" id="7E93"/>
<dbReference type="PDBsum" id="7E94"/>
<dbReference type="PDBsum" id="7EA3"/>
<dbReference type="PDBsum" id="7U05"/>
<dbReference type="PDBsum" id="7U06"/>
<dbReference type="EMDB" id="EMD-26254"/>
<dbReference type="EMDB" id="EMD-26255"/>
<dbReference type="EMDB" id="EMD-30954"/>
<dbReference type="EMDB" id="EMD-30955"/>
<dbReference type="EMDB" id="EMD-31021"/>
<dbReference type="EMDB" id="EMD-31022"/>
<dbReference type="EMDB" id="EMD-31027"/>
<dbReference type="EMDB" id="EMD-31028"/>
<dbReference type="EMDB" id="EMD-31038"/>
<dbReference type="SMR" id="P32613"/>
<dbReference type="BioGRID" id="36682">
    <property type="interactions" value="78"/>
</dbReference>
<dbReference type="ComplexPortal" id="CPX-1939">
    <property type="entry name" value="TRAPP II complex"/>
</dbReference>
<dbReference type="DIP" id="DIP-5288N"/>
<dbReference type="FunCoup" id="P32613">
    <property type="interactions" value="43"/>
</dbReference>
<dbReference type="IntAct" id="P32613">
    <property type="interactions" value="14"/>
</dbReference>
<dbReference type="STRING" id="4932.YEL048C"/>
<dbReference type="PaxDb" id="4932-YEL048C"/>
<dbReference type="PeptideAtlas" id="P32613"/>
<dbReference type="EnsemblFungi" id="YEL048C_mRNA">
    <property type="protein sequence ID" value="YEL048C"/>
    <property type="gene ID" value="YEL048C"/>
</dbReference>
<dbReference type="GeneID" id="856663"/>
<dbReference type="KEGG" id="sce:YEL048C"/>
<dbReference type="AGR" id="SGD:S000000774"/>
<dbReference type="SGD" id="S000000774">
    <property type="gene designation" value="TCA17"/>
</dbReference>
<dbReference type="VEuPathDB" id="FungiDB:YEL048C"/>
<dbReference type="eggNOG" id="ENOG502S4FS">
    <property type="taxonomic scope" value="Eukaryota"/>
</dbReference>
<dbReference type="HOGENOM" id="CLU_097630_1_0_1"/>
<dbReference type="InParanoid" id="P32613"/>
<dbReference type="OMA" id="VFGMLIK"/>
<dbReference type="OrthoDB" id="18320at2759"/>
<dbReference type="BioCyc" id="YEAST:G3O-30166-MONOMER"/>
<dbReference type="Reactome" id="R-SCE-204005">
    <property type="pathway name" value="COPII-mediated vesicle transport"/>
</dbReference>
<dbReference type="Reactome" id="R-SCE-8876198">
    <property type="pathway name" value="RAB GEFs exchange GTP for GDP on RABs"/>
</dbReference>
<dbReference type="BioGRID-ORCS" id="856663">
    <property type="hits" value="1 hit in 10 CRISPR screens"/>
</dbReference>
<dbReference type="EvolutionaryTrace" id="P32613"/>
<dbReference type="PRO" id="PR:P32613"/>
<dbReference type="Proteomes" id="UP000002311">
    <property type="component" value="Chromosome V"/>
</dbReference>
<dbReference type="RNAct" id="P32613">
    <property type="molecule type" value="protein"/>
</dbReference>
<dbReference type="GO" id="GO:0005737">
    <property type="term" value="C:cytoplasm"/>
    <property type="evidence" value="ECO:0000318"/>
    <property type="project" value="GO_Central"/>
</dbReference>
<dbReference type="GO" id="GO:0005829">
    <property type="term" value="C:cytosol"/>
    <property type="evidence" value="ECO:0007005"/>
    <property type="project" value="SGD"/>
</dbReference>
<dbReference type="GO" id="GO:0005794">
    <property type="term" value="C:Golgi apparatus"/>
    <property type="evidence" value="ECO:0000314"/>
    <property type="project" value="SGD"/>
</dbReference>
<dbReference type="GO" id="GO:0005634">
    <property type="term" value="C:nucleus"/>
    <property type="evidence" value="ECO:0000318"/>
    <property type="project" value="GO_Central"/>
</dbReference>
<dbReference type="GO" id="GO:0030008">
    <property type="term" value="C:TRAPP complex"/>
    <property type="evidence" value="ECO:0000318"/>
    <property type="project" value="GO_Central"/>
</dbReference>
<dbReference type="GO" id="GO:1990071">
    <property type="term" value="C:TRAPPII protein complex"/>
    <property type="evidence" value="ECO:0000314"/>
    <property type="project" value="SGD"/>
</dbReference>
<dbReference type="GO" id="GO:0034498">
    <property type="term" value="P:early endosome to Golgi transport"/>
    <property type="evidence" value="ECO:0000315"/>
    <property type="project" value="SGD"/>
</dbReference>
<dbReference type="GO" id="GO:0006888">
    <property type="term" value="P:endoplasmic reticulum to Golgi vesicle-mediated transport"/>
    <property type="evidence" value="ECO:0000318"/>
    <property type="project" value="GO_Central"/>
</dbReference>
<dbReference type="GO" id="GO:0006891">
    <property type="term" value="P:intra-Golgi vesicle-mediated transport"/>
    <property type="evidence" value="ECO:0000303"/>
    <property type="project" value="ComplexPortal"/>
</dbReference>
<dbReference type="GO" id="GO:0065003">
    <property type="term" value="P:protein-containing complex assembly"/>
    <property type="evidence" value="ECO:0000315"/>
    <property type="project" value="SGD"/>
</dbReference>
<dbReference type="GO" id="GO:0042147">
    <property type="term" value="P:retrograde transport, endosome to Golgi"/>
    <property type="evidence" value="ECO:0000303"/>
    <property type="project" value="ComplexPortal"/>
</dbReference>
<dbReference type="Gene3D" id="3.30.450.70">
    <property type="match status" value="1"/>
</dbReference>
<dbReference type="InterPro" id="IPR011012">
    <property type="entry name" value="Longin-like_dom_sf"/>
</dbReference>
<dbReference type="InterPro" id="IPR006722">
    <property type="entry name" value="Sedlin"/>
</dbReference>
<dbReference type="Pfam" id="PF04628">
    <property type="entry name" value="Sedlin_N"/>
    <property type="match status" value="1"/>
</dbReference>
<dbReference type="SUPFAM" id="SSF64356">
    <property type="entry name" value="SNARE-like"/>
    <property type="match status" value="1"/>
</dbReference>
<evidence type="ECO:0000269" key="1">
    <source>
    </source>
</evidence>
<evidence type="ECO:0000269" key="2">
    <source>
    </source>
</evidence>
<evidence type="ECO:0000269" key="3">
    <source>
    </source>
</evidence>
<evidence type="ECO:0000305" key="4"/>
<evidence type="ECO:0007829" key="5">
    <source>
        <dbReference type="PDB" id="3PR6"/>
    </source>
</evidence>
<protein>
    <recommendedName>
        <fullName>TRAPP-associated protein TCA17</fullName>
    </recommendedName>
    <alternativeName>
        <fullName>17 kDa TRAPP complex-associated protein</fullName>
    </alternativeName>
</protein>
<sequence length="152" mass="17354">MSLRPCFVSLIDESDKPILIYVPNEAENEMNDVLKYNVLSNISLDYFESALVEWHSLDSKPLLKSIFQLEGVSVFAMLIKQTGLKIVIGFEQKSLSGADDEFEAINQIFETVRKIYIRVKCNPLLVSGDEKSIIKSLERKFDELFISTEVEL</sequence>
<organism>
    <name type="scientific">Saccharomyces cerevisiae (strain ATCC 204508 / S288c)</name>
    <name type="common">Baker's yeast</name>
    <dbReference type="NCBI Taxonomy" id="559292"/>
    <lineage>
        <taxon>Eukaryota</taxon>
        <taxon>Fungi</taxon>
        <taxon>Dikarya</taxon>
        <taxon>Ascomycota</taxon>
        <taxon>Saccharomycotina</taxon>
        <taxon>Saccharomycetes</taxon>
        <taxon>Saccharomycetales</taxon>
        <taxon>Saccharomycetaceae</taxon>
        <taxon>Saccharomyces</taxon>
    </lineage>
</organism>
<reference key="1">
    <citation type="journal article" date="1997" name="Nature">
        <title>The nucleotide sequence of Saccharomyces cerevisiae chromosome V.</title>
        <authorList>
            <person name="Dietrich F.S."/>
            <person name="Mulligan J.T."/>
            <person name="Hennessy K.M."/>
            <person name="Yelton M.A."/>
            <person name="Allen E."/>
            <person name="Araujo R."/>
            <person name="Aviles E."/>
            <person name="Berno A."/>
            <person name="Brennan T."/>
            <person name="Carpenter J."/>
            <person name="Chen E."/>
            <person name="Cherry J.M."/>
            <person name="Chung E."/>
            <person name="Duncan M."/>
            <person name="Guzman E."/>
            <person name="Hartzell G."/>
            <person name="Hunicke-Smith S."/>
            <person name="Hyman R.W."/>
            <person name="Kayser A."/>
            <person name="Komp C."/>
            <person name="Lashkari D."/>
            <person name="Lew H."/>
            <person name="Lin D."/>
            <person name="Mosedale D."/>
            <person name="Nakahara K."/>
            <person name="Namath A."/>
            <person name="Norgren R."/>
            <person name="Oefner P."/>
            <person name="Oh C."/>
            <person name="Petel F.X."/>
            <person name="Roberts D."/>
            <person name="Sehl P."/>
            <person name="Schramm S."/>
            <person name="Shogren T."/>
            <person name="Smith V."/>
            <person name="Taylor P."/>
            <person name="Wei Y."/>
            <person name="Botstein D."/>
            <person name="Davis R.W."/>
        </authorList>
    </citation>
    <scope>NUCLEOTIDE SEQUENCE [LARGE SCALE GENOMIC DNA]</scope>
    <source>
        <strain>ATCC 204508 / S288c</strain>
    </source>
</reference>
<reference key="2">
    <citation type="journal article" date="2014" name="G3 (Bethesda)">
        <title>The reference genome sequence of Saccharomyces cerevisiae: Then and now.</title>
        <authorList>
            <person name="Engel S.R."/>
            <person name="Dietrich F.S."/>
            <person name="Fisk D.G."/>
            <person name="Binkley G."/>
            <person name="Balakrishnan R."/>
            <person name="Costanzo M.C."/>
            <person name="Dwight S.S."/>
            <person name="Hitz B.C."/>
            <person name="Karra K."/>
            <person name="Nash R.S."/>
            <person name="Weng S."/>
            <person name="Wong E.D."/>
            <person name="Lloyd P."/>
            <person name="Skrzypek M.S."/>
            <person name="Miyasato S.R."/>
            <person name="Simison M."/>
            <person name="Cherry J.M."/>
        </authorList>
    </citation>
    <scope>GENOME REANNOTATION</scope>
    <source>
        <strain>ATCC 204508 / S288c</strain>
    </source>
</reference>
<reference key="3">
    <citation type="journal article" date="2007" name="Genome Res.">
        <title>Approaching a complete repository of sequence-verified protein-encoding clones for Saccharomyces cerevisiae.</title>
        <authorList>
            <person name="Hu Y."/>
            <person name="Rolfs A."/>
            <person name="Bhullar B."/>
            <person name="Murthy T.V.S."/>
            <person name="Zhu C."/>
            <person name="Berger M.F."/>
            <person name="Camargo A.A."/>
            <person name="Kelley F."/>
            <person name="McCarron S."/>
            <person name="Jepson D."/>
            <person name="Richardson A."/>
            <person name="Raphael J."/>
            <person name="Moreira D."/>
            <person name="Taycher E."/>
            <person name="Zuo D."/>
            <person name="Mohr S."/>
            <person name="Kane M.F."/>
            <person name="Williamson J."/>
            <person name="Simpson A.J.G."/>
            <person name="Bulyk M.L."/>
            <person name="Harlow E."/>
            <person name="Marsischky G."/>
            <person name="Kolodner R.D."/>
            <person name="LaBaer J."/>
        </authorList>
    </citation>
    <scope>NUCLEOTIDE SEQUENCE [GENOMIC DNA]</scope>
    <source>
        <strain>ATCC 204508 / S288c</strain>
    </source>
</reference>
<reference key="4">
    <citation type="journal article" date="2003" name="Nature">
        <title>Global analysis of protein expression in yeast.</title>
        <authorList>
            <person name="Ghaemmaghami S."/>
            <person name="Huh W.-K."/>
            <person name="Bower K."/>
            <person name="Howson R.W."/>
            <person name="Belle A."/>
            <person name="Dephoure N."/>
            <person name="O'Shea E.K."/>
            <person name="Weissman J.S."/>
        </authorList>
    </citation>
    <scope>LEVEL OF PROTEIN EXPRESSION [LARGE SCALE ANALYSIS]</scope>
</reference>
<reference key="5">
    <citation type="journal article" date="2009" name="Traffic">
        <title>Identification of the novel TRAPP associated protein Tca17.</title>
        <authorList>
            <person name="Montpetit B."/>
            <person name="Conibear E."/>
        </authorList>
    </citation>
    <scope>FUNCTION</scope>
    <scope>INTERACTION WITH THE TRAPP II COMPLEX</scope>
    <scope>SUBCELLULAR LOCATION</scope>
</reference>
<reference key="6">
    <citation type="journal article" date="2009" name="Traffic">
        <title>TRAPPC2L is a novel, highly conserved TRAPP-interacting protein.</title>
        <authorList>
            <person name="Scrivens P.J."/>
            <person name="Shahrzad N."/>
            <person name="Moores A."/>
            <person name="Morin A."/>
            <person name="Brunet S."/>
            <person name="Sacher M."/>
        </authorList>
    </citation>
    <scope>FUNCTION</scope>
    <scope>INTERACTION WITH THE TRAPP II COMPLEX</scope>
</reference>
<name>TCA17_YEAST</name>
<proteinExistence type="evidence at protein level"/>
<keyword id="KW-0002">3D-structure</keyword>
<keyword id="KW-0333">Golgi apparatus</keyword>
<keyword id="KW-1185">Reference proteome</keyword>
<accession>P32613</accession>
<accession>D3DLK2</accession>
<accession>Q6Q561</accession>
<feature type="chain" id="PRO_0000202605" description="TRAPP-associated protein TCA17">
    <location>
        <begin position="1"/>
        <end position="152"/>
    </location>
</feature>
<feature type="sequence conflict" description="In Ref. 3; AAS56768." evidence="4" ref="3">
    <original>S</original>
    <variation>T</variation>
    <location>
        <position position="2"/>
    </location>
</feature>
<feature type="strand" evidence="5">
    <location>
        <begin position="6"/>
        <end position="11"/>
    </location>
</feature>
<feature type="strand" evidence="5">
    <location>
        <begin position="17"/>
        <end position="21"/>
    </location>
</feature>
<feature type="helix" evidence="5">
    <location>
        <begin position="33"/>
        <end position="48"/>
    </location>
</feature>
<feature type="strand" evidence="5">
    <location>
        <begin position="57"/>
        <end position="60"/>
    </location>
</feature>
<feature type="strand" evidence="5">
    <location>
        <begin position="64"/>
        <end position="69"/>
    </location>
</feature>
<feature type="strand" evidence="5">
    <location>
        <begin position="72"/>
        <end position="78"/>
    </location>
</feature>
<feature type="turn" evidence="5">
    <location>
        <begin position="80"/>
        <end position="82"/>
    </location>
</feature>
<feature type="strand" evidence="5">
    <location>
        <begin position="85"/>
        <end position="91"/>
    </location>
</feature>
<feature type="helix" evidence="5">
    <location>
        <begin position="92"/>
        <end position="94"/>
    </location>
</feature>
<feature type="helix" evidence="5">
    <location>
        <begin position="99"/>
        <end position="120"/>
    </location>
</feature>
<feature type="helix" evidence="5">
    <location>
        <begin position="125"/>
        <end position="127"/>
    </location>
</feature>
<feature type="helix" evidence="5">
    <location>
        <begin position="130"/>
        <end position="145"/>
    </location>
</feature>
<feature type="helix" evidence="5">
    <location>
        <begin position="149"/>
        <end position="152"/>
    </location>
</feature>
<gene>
    <name type="primary">TCA17</name>
    <name type="ordered locus">YEL048C</name>
    <name type="ORF">SYGP-ORF36</name>
</gene>